<organism>
    <name type="scientific">Burkholderia lata (strain ATCC 17760 / DSM 23089 / LMG 22485 / NCIMB 9086 / R18194 / 383)</name>
    <dbReference type="NCBI Taxonomy" id="482957"/>
    <lineage>
        <taxon>Bacteria</taxon>
        <taxon>Pseudomonadati</taxon>
        <taxon>Pseudomonadota</taxon>
        <taxon>Betaproteobacteria</taxon>
        <taxon>Burkholderiales</taxon>
        <taxon>Burkholderiaceae</taxon>
        <taxon>Burkholderia</taxon>
        <taxon>Burkholderia cepacia complex</taxon>
    </lineage>
</organism>
<proteinExistence type="inferred from homology"/>
<protein>
    <recommendedName>
        <fullName evidence="1">Probable D-serine dehydratase</fullName>
        <ecNumber evidence="1">4.3.1.18</ecNumber>
    </recommendedName>
    <alternativeName>
        <fullName evidence="1">D-serine deaminase</fullName>
        <shortName evidence="1">DSD</shortName>
    </alternativeName>
</protein>
<reference key="1">
    <citation type="submission" date="2005-10" db="EMBL/GenBank/DDBJ databases">
        <title>Complete sequence of chromosome 2 of Burkholderia sp. 383.</title>
        <authorList>
            <consortium name="US DOE Joint Genome Institute"/>
            <person name="Copeland A."/>
            <person name="Lucas S."/>
            <person name="Lapidus A."/>
            <person name="Barry K."/>
            <person name="Detter J.C."/>
            <person name="Glavina T."/>
            <person name="Hammon N."/>
            <person name="Israni S."/>
            <person name="Pitluck S."/>
            <person name="Chain P."/>
            <person name="Malfatti S."/>
            <person name="Shin M."/>
            <person name="Vergez L."/>
            <person name="Schmutz J."/>
            <person name="Larimer F."/>
            <person name="Land M."/>
            <person name="Kyrpides N."/>
            <person name="Lykidis A."/>
            <person name="Richardson P."/>
        </authorList>
    </citation>
    <scope>NUCLEOTIDE SEQUENCE [LARGE SCALE GENOMIC DNA]</scope>
    <source>
        <strain>ATCC 17760 / DSM 23089 / LMG 22485 / NCIMB 9086 / R18194 / 383</strain>
    </source>
</reference>
<accession>Q396Y3</accession>
<feature type="chain" id="PRO_0000291721" description="Probable D-serine dehydratase">
    <location>
        <begin position="1"/>
        <end position="446"/>
    </location>
</feature>
<feature type="modified residue" description="N6-(pyridoxal phosphate)lysine" evidence="1">
    <location>
        <position position="113"/>
    </location>
</feature>
<evidence type="ECO:0000255" key="1">
    <source>
        <dbReference type="HAMAP-Rule" id="MF_01030"/>
    </source>
</evidence>
<gene>
    <name evidence="1" type="primary">dsdA</name>
    <name type="ordered locus">Bcep18194_B1364</name>
</gene>
<sequence>MRYRSMTVTLQPADLLARLQSRHPLLWLNPHAGSPLPHDAPGPGAIATAEARLARCEPLMAELFPELATSAGKIESPLMPADNLQRTLSLPADTHGAWFIKRDDALPIAGSIKARGGFHEVLALAESIAIEHGLLEPAGDRRILASAAARERFAAHTVIVGSTGNLGLSIGVMASALGFESVVHMSTDAKPWKKARLRQRGVRVIEHDGDYAQAVAAGRAQARNQPRSHFVDDEGSLMLFLGYAASARHLAAQLAEAGRRVDATHPLFVHIPCGVGGAPGGIAHGLKALFGEHVHCFFAEPVASPCMLVQLAAGLGKPVSVYDVGLDNRTEADGLAVAQASHLVSPLMASLLSGVFTVSDAQLYAQLLAVQHATGVELEPSAAAAVGGPGWLTRSPAGRDYVHRHAIDLRQSTHVIWATGGSLVPPEEHRRFQSHAKALAGAAAGT</sequence>
<comment type="catalytic activity">
    <reaction evidence="1">
        <text>D-serine = pyruvate + NH4(+)</text>
        <dbReference type="Rhea" id="RHEA:13977"/>
        <dbReference type="ChEBI" id="CHEBI:15361"/>
        <dbReference type="ChEBI" id="CHEBI:28938"/>
        <dbReference type="ChEBI" id="CHEBI:35247"/>
        <dbReference type="EC" id="4.3.1.18"/>
    </reaction>
</comment>
<comment type="cofactor">
    <cofactor evidence="1">
        <name>pyridoxal 5'-phosphate</name>
        <dbReference type="ChEBI" id="CHEBI:597326"/>
    </cofactor>
</comment>
<comment type="similarity">
    <text evidence="1">Belongs to the serine/threonine dehydratase family. DsdA subfamily.</text>
</comment>
<keyword id="KW-0456">Lyase</keyword>
<keyword id="KW-0663">Pyridoxal phosphate</keyword>
<name>SDHD_BURL3</name>
<dbReference type="EC" id="4.3.1.18" evidence="1"/>
<dbReference type="EMBL" id="CP000152">
    <property type="protein sequence ID" value="ABB11478.1"/>
    <property type="molecule type" value="Genomic_DNA"/>
</dbReference>
<dbReference type="SMR" id="Q396Y3"/>
<dbReference type="KEGG" id="bur:Bcep18194_B1364"/>
<dbReference type="PATRIC" id="fig|482957.22.peg.5050"/>
<dbReference type="HOGENOM" id="CLU_035707_0_0_4"/>
<dbReference type="Proteomes" id="UP000002705">
    <property type="component" value="Chromosome 2"/>
</dbReference>
<dbReference type="GO" id="GO:0008721">
    <property type="term" value="F:D-serine ammonia-lyase activity"/>
    <property type="evidence" value="ECO:0007669"/>
    <property type="project" value="UniProtKB-EC"/>
</dbReference>
<dbReference type="GO" id="GO:0016836">
    <property type="term" value="F:hydro-lyase activity"/>
    <property type="evidence" value="ECO:0007669"/>
    <property type="project" value="UniProtKB-UniRule"/>
</dbReference>
<dbReference type="GO" id="GO:0030170">
    <property type="term" value="F:pyridoxal phosphate binding"/>
    <property type="evidence" value="ECO:0007669"/>
    <property type="project" value="InterPro"/>
</dbReference>
<dbReference type="GO" id="GO:0036088">
    <property type="term" value="P:D-serine catabolic process"/>
    <property type="evidence" value="ECO:0007669"/>
    <property type="project" value="TreeGrafter"/>
</dbReference>
<dbReference type="GO" id="GO:0009097">
    <property type="term" value="P:isoleucine biosynthetic process"/>
    <property type="evidence" value="ECO:0007669"/>
    <property type="project" value="TreeGrafter"/>
</dbReference>
<dbReference type="Gene3D" id="3.40.50.1100">
    <property type="match status" value="2"/>
</dbReference>
<dbReference type="HAMAP" id="MF_01030">
    <property type="entry name" value="D_Ser_dehydrat"/>
    <property type="match status" value="1"/>
</dbReference>
<dbReference type="InterPro" id="IPR011780">
    <property type="entry name" value="D_Ser_am_lyase"/>
</dbReference>
<dbReference type="InterPro" id="IPR050147">
    <property type="entry name" value="Ser/Thr_Dehydratase"/>
</dbReference>
<dbReference type="InterPro" id="IPR001926">
    <property type="entry name" value="TrpB-like_PALP"/>
</dbReference>
<dbReference type="InterPro" id="IPR036052">
    <property type="entry name" value="TrpB-like_PALP_sf"/>
</dbReference>
<dbReference type="NCBIfam" id="TIGR02035">
    <property type="entry name" value="D_Ser_am_lyase"/>
    <property type="match status" value="1"/>
</dbReference>
<dbReference type="NCBIfam" id="NF002823">
    <property type="entry name" value="PRK02991.1"/>
    <property type="match status" value="1"/>
</dbReference>
<dbReference type="PANTHER" id="PTHR48078:SF9">
    <property type="entry name" value="D-SERINE DEHYDRATASE"/>
    <property type="match status" value="1"/>
</dbReference>
<dbReference type="PANTHER" id="PTHR48078">
    <property type="entry name" value="THREONINE DEHYDRATASE, MITOCHONDRIAL-RELATED"/>
    <property type="match status" value="1"/>
</dbReference>
<dbReference type="Pfam" id="PF00291">
    <property type="entry name" value="PALP"/>
    <property type="match status" value="1"/>
</dbReference>
<dbReference type="SUPFAM" id="SSF53686">
    <property type="entry name" value="Tryptophan synthase beta subunit-like PLP-dependent enzymes"/>
    <property type="match status" value="1"/>
</dbReference>